<accession>Q1QUS4</accession>
<gene>
    <name evidence="1" type="primary">aat</name>
    <name type="ordered locus">Csal_2437</name>
</gene>
<comment type="function">
    <text evidence="1">Functions in the N-end rule pathway of protein degradation where it conjugates Leu, Phe and, less efficiently, Met from aminoacyl-tRNAs to the N-termini of proteins containing an N-terminal arginine or lysine.</text>
</comment>
<comment type="catalytic activity">
    <reaction evidence="1">
        <text>N-terminal L-lysyl-[protein] + L-leucyl-tRNA(Leu) = N-terminal L-leucyl-L-lysyl-[protein] + tRNA(Leu) + H(+)</text>
        <dbReference type="Rhea" id="RHEA:12340"/>
        <dbReference type="Rhea" id="RHEA-COMP:9613"/>
        <dbReference type="Rhea" id="RHEA-COMP:9622"/>
        <dbReference type="Rhea" id="RHEA-COMP:12670"/>
        <dbReference type="Rhea" id="RHEA-COMP:12671"/>
        <dbReference type="ChEBI" id="CHEBI:15378"/>
        <dbReference type="ChEBI" id="CHEBI:65249"/>
        <dbReference type="ChEBI" id="CHEBI:78442"/>
        <dbReference type="ChEBI" id="CHEBI:78494"/>
        <dbReference type="ChEBI" id="CHEBI:133043"/>
        <dbReference type="EC" id="2.3.2.6"/>
    </reaction>
</comment>
<comment type="catalytic activity">
    <reaction evidence="1">
        <text>N-terminal L-arginyl-[protein] + L-leucyl-tRNA(Leu) = N-terminal L-leucyl-L-arginyl-[protein] + tRNA(Leu) + H(+)</text>
        <dbReference type="Rhea" id="RHEA:50416"/>
        <dbReference type="Rhea" id="RHEA-COMP:9613"/>
        <dbReference type="Rhea" id="RHEA-COMP:9622"/>
        <dbReference type="Rhea" id="RHEA-COMP:12672"/>
        <dbReference type="Rhea" id="RHEA-COMP:12673"/>
        <dbReference type="ChEBI" id="CHEBI:15378"/>
        <dbReference type="ChEBI" id="CHEBI:64719"/>
        <dbReference type="ChEBI" id="CHEBI:78442"/>
        <dbReference type="ChEBI" id="CHEBI:78494"/>
        <dbReference type="ChEBI" id="CHEBI:133044"/>
        <dbReference type="EC" id="2.3.2.6"/>
    </reaction>
</comment>
<comment type="catalytic activity">
    <reaction evidence="1">
        <text>L-phenylalanyl-tRNA(Phe) + an N-terminal L-alpha-aminoacyl-[protein] = an N-terminal L-phenylalanyl-L-alpha-aminoacyl-[protein] + tRNA(Phe)</text>
        <dbReference type="Rhea" id="RHEA:43632"/>
        <dbReference type="Rhea" id="RHEA-COMP:9668"/>
        <dbReference type="Rhea" id="RHEA-COMP:9699"/>
        <dbReference type="Rhea" id="RHEA-COMP:10636"/>
        <dbReference type="Rhea" id="RHEA-COMP:10637"/>
        <dbReference type="ChEBI" id="CHEBI:78442"/>
        <dbReference type="ChEBI" id="CHEBI:78531"/>
        <dbReference type="ChEBI" id="CHEBI:78597"/>
        <dbReference type="ChEBI" id="CHEBI:83561"/>
        <dbReference type="EC" id="2.3.2.6"/>
    </reaction>
</comment>
<comment type="subcellular location">
    <subcellularLocation>
        <location evidence="1">Cytoplasm</location>
    </subcellularLocation>
</comment>
<comment type="similarity">
    <text evidence="1">Belongs to the L/F-transferase family.</text>
</comment>
<organism>
    <name type="scientific">Chromohalobacter salexigens (strain ATCC BAA-138 / DSM 3043 / CIP 106854 / NCIMB 13768 / 1H11)</name>
    <dbReference type="NCBI Taxonomy" id="290398"/>
    <lineage>
        <taxon>Bacteria</taxon>
        <taxon>Pseudomonadati</taxon>
        <taxon>Pseudomonadota</taxon>
        <taxon>Gammaproteobacteria</taxon>
        <taxon>Oceanospirillales</taxon>
        <taxon>Halomonadaceae</taxon>
        <taxon>Chromohalobacter</taxon>
    </lineage>
</organism>
<dbReference type="EC" id="2.3.2.6" evidence="1"/>
<dbReference type="EMBL" id="CP000285">
    <property type="protein sequence ID" value="ABE59784.1"/>
    <property type="molecule type" value="Genomic_DNA"/>
</dbReference>
<dbReference type="RefSeq" id="WP_011507730.1">
    <property type="nucleotide sequence ID" value="NC_007963.1"/>
</dbReference>
<dbReference type="SMR" id="Q1QUS4"/>
<dbReference type="STRING" id="290398.Csal_2437"/>
<dbReference type="GeneID" id="95335143"/>
<dbReference type="KEGG" id="csa:Csal_2437"/>
<dbReference type="eggNOG" id="COG2360">
    <property type="taxonomic scope" value="Bacteria"/>
</dbReference>
<dbReference type="HOGENOM" id="CLU_075045_0_0_6"/>
<dbReference type="OrthoDB" id="9790282at2"/>
<dbReference type="Proteomes" id="UP000000239">
    <property type="component" value="Chromosome"/>
</dbReference>
<dbReference type="GO" id="GO:0005737">
    <property type="term" value="C:cytoplasm"/>
    <property type="evidence" value="ECO:0007669"/>
    <property type="project" value="UniProtKB-SubCell"/>
</dbReference>
<dbReference type="GO" id="GO:0008914">
    <property type="term" value="F:leucyl-tRNA--protein transferase activity"/>
    <property type="evidence" value="ECO:0007669"/>
    <property type="project" value="UniProtKB-UniRule"/>
</dbReference>
<dbReference type="GO" id="GO:0030163">
    <property type="term" value="P:protein catabolic process"/>
    <property type="evidence" value="ECO:0007669"/>
    <property type="project" value="UniProtKB-UniRule"/>
</dbReference>
<dbReference type="FunFam" id="3.30.70.3550:FF:000001">
    <property type="entry name" value="Leucyl/phenylalanyl-tRNA--protein transferase"/>
    <property type="match status" value="1"/>
</dbReference>
<dbReference type="FunFam" id="3.40.630.70:FF:000001">
    <property type="entry name" value="Leucyl/phenylalanyl-tRNA--protein transferase"/>
    <property type="match status" value="1"/>
</dbReference>
<dbReference type="Gene3D" id="3.40.630.70">
    <property type="entry name" value="Leucyl/phenylalanyl-tRNA-protein transferase, C-terminal domain"/>
    <property type="match status" value="1"/>
</dbReference>
<dbReference type="Gene3D" id="3.30.70.3550">
    <property type="entry name" value="Leucyl/phenylalanyl-tRNA-protein transferase, N-terminal domain"/>
    <property type="match status" value="1"/>
</dbReference>
<dbReference type="HAMAP" id="MF_00688">
    <property type="entry name" value="Leu_Phe_trans"/>
    <property type="match status" value="1"/>
</dbReference>
<dbReference type="InterPro" id="IPR016181">
    <property type="entry name" value="Acyl_CoA_acyltransferase"/>
</dbReference>
<dbReference type="InterPro" id="IPR004616">
    <property type="entry name" value="Leu/Phe-tRNA_Trfase"/>
</dbReference>
<dbReference type="InterPro" id="IPR042203">
    <property type="entry name" value="Leu/Phe-tRNA_Trfase_C"/>
</dbReference>
<dbReference type="InterPro" id="IPR042221">
    <property type="entry name" value="Leu/Phe-tRNA_Trfase_N"/>
</dbReference>
<dbReference type="NCBIfam" id="TIGR00667">
    <property type="entry name" value="aat"/>
    <property type="match status" value="1"/>
</dbReference>
<dbReference type="PANTHER" id="PTHR30098">
    <property type="entry name" value="LEUCYL/PHENYLALANYL-TRNA--PROTEIN TRANSFERASE"/>
    <property type="match status" value="1"/>
</dbReference>
<dbReference type="PANTHER" id="PTHR30098:SF2">
    <property type="entry name" value="LEUCYL_PHENYLALANYL-TRNA--PROTEIN TRANSFERASE"/>
    <property type="match status" value="1"/>
</dbReference>
<dbReference type="Pfam" id="PF03588">
    <property type="entry name" value="Leu_Phe_trans"/>
    <property type="match status" value="1"/>
</dbReference>
<dbReference type="SUPFAM" id="SSF55729">
    <property type="entry name" value="Acyl-CoA N-acyltransferases (Nat)"/>
    <property type="match status" value="1"/>
</dbReference>
<protein>
    <recommendedName>
        <fullName evidence="1">Leucyl/phenylalanyl-tRNA--protein transferase</fullName>
        <ecNumber evidence="1">2.3.2.6</ecNumber>
    </recommendedName>
    <alternativeName>
        <fullName evidence="1">L/F-transferase</fullName>
    </alternativeName>
    <alternativeName>
        <fullName evidence="1">Leucyltransferase</fullName>
    </alternativeName>
    <alternativeName>
        <fullName evidence="1">Phenyalanyltransferase</fullName>
    </alternativeName>
</protein>
<reference key="1">
    <citation type="journal article" date="2011" name="Stand. Genomic Sci.">
        <title>Complete genome sequence of the halophilic and highly halotolerant Chromohalobacter salexigens type strain (1H11(T)).</title>
        <authorList>
            <person name="Copeland A."/>
            <person name="O'Connor K."/>
            <person name="Lucas S."/>
            <person name="Lapidus A."/>
            <person name="Berry K.W."/>
            <person name="Detter J.C."/>
            <person name="Del Rio T.G."/>
            <person name="Hammon N."/>
            <person name="Dalin E."/>
            <person name="Tice H."/>
            <person name="Pitluck S."/>
            <person name="Bruce D."/>
            <person name="Goodwin L."/>
            <person name="Han C."/>
            <person name="Tapia R."/>
            <person name="Saunders E."/>
            <person name="Schmutz J."/>
            <person name="Brettin T."/>
            <person name="Larimer F."/>
            <person name="Land M."/>
            <person name="Hauser L."/>
            <person name="Vargas C."/>
            <person name="Nieto J.J."/>
            <person name="Kyrpides N.C."/>
            <person name="Ivanova N."/>
            <person name="Goker M."/>
            <person name="Klenk H.P."/>
            <person name="Csonka L.N."/>
            <person name="Woyke T."/>
        </authorList>
    </citation>
    <scope>NUCLEOTIDE SEQUENCE [LARGE SCALE GENOMIC DNA]</scope>
    <source>
        <strain>ATCC BAA-138 / DSM 3043 / CIP 106854 / NCIMB 13768 / 1H11</strain>
    </source>
</reference>
<name>LFTR_CHRSD</name>
<feature type="chain" id="PRO_0000258054" description="Leucyl/phenylalanyl-tRNA--protein transferase">
    <location>
        <begin position="1"/>
        <end position="256"/>
    </location>
</feature>
<feature type="region of interest" description="Disordered" evidence="2">
    <location>
        <begin position="232"/>
        <end position="256"/>
    </location>
</feature>
<feature type="compositionally biased region" description="Basic and acidic residues" evidence="2">
    <location>
        <begin position="245"/>
        <end position="256"/>
    </location>
</feature>
<evidence type="ECO:0000255" key="1">
    <source>
        <dbReference type="HAMAP-Rule" id="MF_00688"/>
    </source>
</evidence>
<evidence type="ECO:0000256" key="2">
    <source>
        <dbReference type="SAM" id="MobiDB-lite"/>
    </source>
</evidence>
<sequence>MLPWLPAHRVAFPAVEHALREPDGLLAAGGDLTPAWLRCAYRHGIFPWFAPGEPILWWSPDPRLVLFPEEIHVRRSLAKRLRNAGFTVTFDHAFEAVITACATTRAAAEGTWITPAMHAAYYRLHIEGDAHSVEVWRDGELVGGLYGIALGGVFFGESMFSRVADASKVALVHLARHLAAHGGRLIDCQVHTPHLASLGARCIARTTFIDYLDQYVSAPVSSSLWPAAPSADGCTGASRHGPGADMRRGDMSREST</sequence>
<proteinExistence type="inferred from homology"/>
<keyword id="KW-0012">Acyltransferase</keyword>
<keyword id="KW-0963">Cytoplasm</keyword>
<keyword id="KW-1185">Reference proteome</keyword>
<keyword id="KW-0808">Transferase</keyword>